<gene>
    <name type="primary">RVB1</name>
    <name type="ordered locus">YALI0C21868g</name>
</gene>
<evidence type="ECO:0000250" key="1"/>
<evidence type="ECO:0000305" key="2"/>
<feature type="chain" id="PRO_0000165660" description="RuvB-like helicase 1">
    <location>
        <begin position="1"/>
        <end position="453"/>
    </location>
</feature>
<feature type="binding site" evidence="1">
    <location>
        <begin position="71"/>
        <end position="78"/>
    </location>
    <ligand>
        <name>ATP</name>
        <dbReference type="ChEBI" id="CHEBI:30616"/>
    </ligand>
</feature>
<dbReference type="EC" id="3.6.4.12"/>
<dbReference type="EMBL" id="CR382129">
    <property type="protein sequence ID" value="CAG82430.1"/>
    <property type="molecule type" value="Genomic_DNA"/>
</dbReference>
<dbReference type="RefSeq" id="XP_502110.1">
    <property type="nucleotide sequence ID" value="XM_502110.1"/>
</dbReference>
<dbReference type="SMR" id="Q6CB52"/>
<dbReference type="FunCoup" id="Q6CB52">
    <property type="interactions" value="1543"/>
</dbReference>
<dbReference type="STRING" id="284591.Q6CB52"/>
<dbReference type="EnsemblFungi" id="CAG82430">
    <property type="protein sequence ID" value="CAG82430"/>
    <property type="gene ID" value="YALI0_C21868g"/>
</dbReference>
<dbReference type="KEGG" id="yli:2909837"/>
<dbReference type="VEuPathDB" id="FungiDB:YALI0_C21868g"/>
<dbReference type="HOGENOM" id="CLU_028311_1_1_1"/>
<dbReference type="InParanoid" id="Q6CB52"/>
<dbReference type="OMA" id="RTLPYNK"/>
<dbReference type="OrthoDB" id="59992at4891"/>
<dbReference type="Proteomes" id="UP000001300">
    <property type="component" value="Chromosome C"/>
</dbReference>
<dbReference type="GO" id="GO:0031011">
    <property type="term" value="C:Ino80 complex"/>
    <property type="evidence" value="ECO:0000318"/>
    <property type="project" value="GO_Central"/>
</dbReference>
<dbReference type="GO" id="GO:0035267">
    <property type="term" value="C:NuA4 histone acetyltransferase complex"/>
    <property type="evidence" value="ECO:0000318"/>
    <property type="project" value="GO_Central"/>
</dbReference>
<dbReference type="GO" id="GO:0097255">
    <property type="term" value="C:R2TP complex"/>
    <property type="evidence" value="ECO:0000318"/>
    <property type="project" value="GO_Central"/>
</dbReference>
<dbReference type="GO" id="GO:0000812">
    <property type="term" value="C:Swr1 complex"/>
    <property type="evidence" value="ECO:0000318"/>
    <property type="project" value="GO_Central"/>
</dbReference>
<dbReference type="GO" id="GO:0043138">
    <property type="term" value="F:3'-5' DNA helicase activity"/>
    <property type="evidence" value="ECO:0007669"/>
    <property type="project" value="EnsemblFungi"/>
</dbReference>
<dbReference type="GO" id="GO:0043139">
    <property type="term" value="F:5'-3' DNA helicase activity"/>
    <property type="evidence" value="ECO:0007669"/>
    <property type="project" value="EnsemblFungi"/>
</dbReference>
<dbReference type="GO" id="GO:0005524">
    <property type="term" value="F:ATP binding"/>
    <property type="evidence" value="ECO:0007669"/>
    <property type="project" value="UniProtKB-KW"/>
</dbReference>
<dbReference type="GO" id="GO:0016887">
    <property type="term" value="F:ATP hydrolysis activity"/>
    <property type="evidence" value="ECO:0007669"/>
    <property type="project" value="InterPro"/>
</dbReference>
<dbReference type="GO" id="GO:0003678">
    <property type="term" value="F:DNA helicase activity"/>
    <property type="evidence" value="ECO:0000318"/>
    <property type="project" value="GO_Central"/>
</dbReference>
<dbReference type="GO" id="GO:0000492">
    <property type="term" value="P:box C/D snoRNP assembly"/>
    <property type="evidence" value="ECO:0000318"/>
    <property type="project" value="GO_Central"/>
</dbReference>
<dbReference type="GO" id="GO:0006338">
    <property type="term" value="P:chromatin remodeling"/>
    <property type="evidence" value="ECO:0000318"/>
    <property type="project" value="GO_Central"/>
</dbReference>
<dbReference type="GO" id="GO:0006281">
    <property type="term" value="P:DNA repair"/>
    <property type="evidence" value="ECO:0007669"/>
    <property type="project" value="UniProtKB-KW"/>
</dbReference>
<dbReference type="GO" id="GO:0006357">
    <property type="term" value="P:regulation of transcription by RNA polymerase II"/>
    <property type="evidence" value="ECO:0000318"/>
    <property type="project" value="GO_Central"/>
</dbReference>
<dbReference type="FunFam" id="1.10.8.60:FF:000010">
    <property type="entry name" value="RuvB-like helicase"/>
    <property type="match status" value="1"/>
</dbReference>
<dbReference type="FunFam" id="2.40.50.360:FF:000001">
    <property type="entry name" value="RuvB-like helicase"/>
    <property type="match status" value="1"/>
</dbReference>
<dbReference type="Gene3D" id="1.10.8.60">
    <property type="match status" value="1"/>
</dbReference>
<dbReference type="Gene3D" id="3.40.50.300">
    <property type="entry name" value="P-loop containing nucleotide triphosphate hydrolases"/>
    <property type="match status" value="1"/>
</dbReference>
<dbReference type="Gene3D" id="2.40.50.360">
    <property type="entry name" value="RuvB-like helicase, domain II"/>
    <property type="match status" value="1"/>
</dbReference>
<dbReference type="InterPro" id="IPR003593">
    <property type="entry name" value="AAA+_ATPase"/>
</dbReference>
<dbReference type="InterPro" id="IPR027417">
    <property type="entry name" value="P-loop_NTPase"/>
</dbReference>
<dbReference type="InterPro" id="IPR027238">
    <property type="entry name" value="RuvB-like"/>
</dbReference>
<dbReference type="InterPro" id="IPR041048">
    <property type="entry name" value="RuvB-like_C"/>
</dbReference>
<dbReference type="InterPro" id="IPR042487">
    <property type="entry name" value="RuvBL1/2_DNA/RNA_bd_dom"/>
</dbReference>
<dbReference type="InterPro" id="IPR010339">
    <property type="entry name" value="TIP49_P-loop"/>
</dbReference>
<dbReference type="PANTHER" id="PTHR11093">
    <property type="entry name" value="RUVB-RELATED REPTIN AND PONTIN"/>
    <property type="match status" value="1"/>
</dbReference>
<dbReference type="Pfam" id="PF06068">
    <property type="entry name" value="TIP49"/>
    <property type="match status" value="1"/>
</dbReference>
<dbReference type="Pfam" id="PF17856">
    <property type="entry name" value="TIP49_C"/>
    <property type="match status" value="1"/>
</dbReference>
<dbReference type="SMART" id="SM00382">
    <property type="entry name" value="AAA"/>
    <property type="match status" value="1"/>
</dbReference>
<dbReference type="SUPFAM" id="SSF52540">
    <property type="entry name" value="P-loop containing nucleoside triphosphate hydrolases"/>
    <property type="match status" value="1"/>
</dbReference>
<organism>
    <name type="scientific">Yarrowia lipolytica (strain CLIB 122 / E 150)</name>
    <name type="common">Yeast</name>
    <name type="synonym">Candida lipolytica</name>
    <dbReference type="NCBI Taxonomy" id="284591"/>
    <lineage>
        <taxon>Eukaryota</taxon>
        <taxon>Fungi</taxon>
        <taxon>Dikarya</taxon>
        <taxon>Ascomycota</taxon>
        <taxon>Saccharomycotina</taxon>
        <taxon>Dipodascomycetes</taxon>
        <taxon>Dipodascales</taxon>
        <taxon>Dipodascales incertae sedis</taxon>
        <taxon>Yarrowia</taxon>
    </lineage>
</organism>
<protein>
    <recommendedName>
        <fullName>RuvB-like helicase 1</fullName>
        <ecNumber>3.6.4.12</ecNumber>
    </recommendedName>
</protein>
<reference key="1">
    <citation type="journal article" date="2004" name="Nature">
        <title>Genome evolution in yeasts.</title>
        <authorList>
            <person name="Dujon B."/>
            <person name="Sherman D."/>
            <person name="Fischer G."/>
            <person name="Durrens P."/>
            <person name="Casaregola S."/>
            <person name="Lafontaine I."/>
            <person name="de Montigny J."/>
            <person name="Marck C."/>
            <person name="Neuveglise C."/>
            <person name="Talla E."/>
            <person name="Goffard N."/>
            <person name="Frangeul L."/>
            <person name="Aigle M."/>
            <person name="Anthouard V."/>
            <person name="Babour A."/>
            <person name="Barbe V."/>
            <person name="Barnay S."/>
            <person name="Blanchin S."/>
            <person name="Beckerich J.-M."/>
            <person name="Beyne E."/>
            <person name="Bleykasten C."/>
            <person name="Boisrame A."/>
            <person name="Boyer J."/>
            <person name="Cattolico L."/>
            <person name="Confanioleri F."/>
            <person name="de Daruvar A."/>
            <person name="Despons L."/>
            <person name="Fabre E."/>
            <person name="Fairhead C."/>
            <person name="Ferry-Dumazet H."/>
            <person name="Groppi A."/>
            <person name="Hantraye F."/>
            <person name="Hennequin C."/>
            <person name="Jauniaux N."/>
            <person name="Joyet P."/>
            <person name="Kachouri R."/>
            <person name="Kerrest A."/>
            <person name="Koszul R."/>
            <person name="Lemaire M."/>
            <person name="Lesur I."/>
            <person name="Ma L."/>
            <person name="Muller H."/>
            <person name="Nicaud J.-M."/>
            <person name="Nikolski M."/>
            <person name="Oztas S."/>
            <person name="Ozier-Kalogeropoulos O."/>
            <person name="Pellenz S."/>
            <person name="Potier S."/>
            <person name="Richard G.-F."/>
            <person name="Straub M.-L."/>
            <person name="Suleau A."/>
            <person name="Swennen D."/>
            <person name="Tekaia F."/>
            <person name="Wesolowski-Louvel M."/>
            <person name="Westhof E."/>
            <person name="Wirth B."/>
            <person name="Zeniou-Meyer M."/>
            <person name="Zivanovic Y."/>
            <person name="Bolotin-Fukuhara M."/>
            <person name="Thierry A."/>
            <person name="Bouchier C."/>
            <person name="Caudron B."/>
            <person name="Scarpelli C."/>
            <person name="Gaillardin C."/>
            <person name="Weissenbach J."/>
            <person name="Wincker P."/>
            <person name="Souciet J.-L."/>
        </authorList>
    </citation>
    <scope>NUCLEOTIDE SEQUENCE [LARGE SCALE GENOMIC DNA]</scope>
    <source>
        <strain>CLIB 122 / E 150</strain>
    </source>
</reference>
<proteinExistence type="inferred from homology"/>
<keyword id="KW-0010">Activator</keyword>
<keyword id="KW-0067">ATP-binding</keyword>
<keyword id="KW-0156">Chromatin regulator</keyword>
<keyword id="KW-0227">DNA damage</keyword>
<keyword id="KW-0234">DNA repair</keyword>
<keyword id="KW-0347">Helicase</keyword>
<keyword id="KW-0378">Hydrolase</keyword>
<keyword id="KW-0547">Nucleotide-binding</keyword>
<keyword id="KW-0539">Nucleus</keyword>
<keyword id="KW-1185">Reference proteome</keyword>
<keyword id="KW-0804">Transcription</keyword>
<keyword id="KW-0805">Transcription regulation</keyword>
<accession>Q6CB52</accession>
<sequence>MVQINEIKSNSRDTRTAAHTHIRGLGLNEMGVAKPIDAGFVGQTEAREALGLVVDLIRASKMSGRGILLAGGPGTGKTALALAVSQELGPKVPFCPIVGSEIFSAEVKKTAALMENFRRAIGLRIKETKDIYEGEVTELTPEEAEDPLGGYGKTIRSVVVGLKSYRGTKQLRLDPKIYESIQKERVAVGDVIYIEANTGAVKRVGRSDAYATEFDLETEEYVPLPKGEVHKKKEIVQDVTLHDLDVANARPQGGQDVMSMMGSLMKPKKTEITDKLREEVNKKVQSYIDQGVAELVPGVLFIDEVNMLDVECFTYLNRALESTISPIVILASNRGMCRVRGVDDDVSPHGITTDLLDRLLIVRTLPYSLDEIKTIIQKRAVVEQQQISEDALDALAQHGARTSLRYGLQLLSPAGVLAKSEGRDVVEVKDVEECESLFLDATRSKGRFTDKFL</sequence>
<comment type="function">
    <text evidence="1">DNA helicase which participates in several chromatin remodeling complexes, including the SWR1 and the INO80 complexes. The SWR1 complex mediates the ATP-dependent exchange of histone H2A for the H2A variant HZT1 leading to transcriptional regulation of selected genes by chromatin remodeling. The INO80 complex remodels chromatin by shifting nucleosomes and is involved in DNA repair. Also involved in pre-rRNA processing (By similarity).</text>
</comment>
<comment type="catalytic activity">
    <reaction>
        <text>ATP + H2O = ADP + phosphate + H(+)</text>
        <dbReference type="Rhea" id="RHEA:13065"/>
        <dbReference type="ChEBI" id="CHEBI:15377"/>
        <dbReference type="ChEBI" id="CHEBI:15378"/>
        <dbReference type="ChEBI" id="CHEBI:30616"/>
        <dbReference type="ChEBI" id="CHEBI:43474"/>
        <dbReference type="ChEBI" id="CHEBI:456216"/>
        <dbReference type="EC" id="3.6.4.12"/>
    </reaction>
</comment>
<comment type="subunit">
    <text evidence="1">May form heterododecamers with RVB2. Component of the SWR1 chromatin remodeling complex, the INO80 chromatin remodeling complex, and of the R2TP complex (By similarity).</text>
</comment>
<comment type="subcellular location">
    <subcellularLocation>
        <location evidence="1">Nucleus</location>
    </subcellularLocation>
</comment>
<comment type="similarity">
    <text evidence="2">Belongs to the RuvB family.</text>
</comment>
<name>RUVB1_YARLI</name>